<proteinExistence type="inferred from homology"/>
<evidence type="ECO:0000255" key="1">
    <source>
        <dbReference type="HAMAP-Rule" id="MF_01369"/>
    </source>
</evidence>
<evidence type="ECO:0000305" key="2"/>
<protein>
    <recommendedName>
        <fullName evidence="1">Large ribosomal subunit protein uL23</fullName>
    </recommendedName>
    <alternativeName>
        <fullName evidence="2">50S ribosomal protein L23</fullName>
    </alternativeName>
</protein>
<keyword id="KW-1185">Reference proteome</keyword>
<keyword id="KW-0687">Ribonucleoprotein</keyword>
<keyword id="KW-0689">Ribosomal protein</keyword>
<keyword id="KW-0694">RNA-binding</keyword>
<keyword id="KW-0699">rRNA-binding</keyword>
<dbReference type="EMBL" id="AE009442">
    <property type="protein sequence ID" value="AAO28318.1"/>
    <property type="molecule type" value="Genomic_DNA"/>
</dbReference>
<dbReference type="RefSeq" id="WP_004090096.1">
    <property type="nucleotide sequence ID" value="NC_004556.1"/>
</dbReference>
<dbReference type="SMR" id="Q87E80"/>
<dbReference type="KEGG" id="xft:PD_0439"/>
<dbReference type="HOGENOM" id="CLU_037562_3_1_6"/>
<dbReference type="Proteomes" id="UP000002516">
    <property type="component" value="Chromosome"/>
</dbReference>
<dbReference type="GO" id="GO:1990904">
    <property type="term" value="C:ribonucleoprotein complex"/>
    <property type="evidence" value="ECO:0007669"/>
    <property type="project" value="UniProtKB-KW"/>
</dbReference>
<dbReference type="GO" id="GO:0005840">
    <property type="term" value="C:ribosome"/>
    <property type="evidence" value="ECO:0007669"/>
    <property type="project" value="UniProtKB-KW"/>
</dbReference>
<dbReference type="GO" id="GO:0019843">
    <property type="term" value="F:rRNA binding"/>
    <property type="evidence" value="ECO:0007669"/>
    <property type="project" value="UniProtKB-UniRule"/>
</dbReference>
<dbReference type="GO" id="GO:0003735">
    <property type="term" value="F:structural constituent of ribosome"/>
    <property type="evidence" value="ECO:0007669"/>
    <property type="project" value="InterPro"/>
</dbReference>
<dbReference type="GO" id="GO:0006412">
    <property type="term" value="P:translation"/>
    <property type="evidence" value="ECO:0007669"/>
    <property type="project" value="UniProtKB-UniRule"/>
</dbReference>
<dbReference type="FunFam" id="3.30.70.330:FF:000001">
    <property type="entry name" value="50S ribosomal protein L23"/>
    <property type="match status" value="1"/>
</dbReference>
<dbReference type="Gene3D" id="3.30.70.330">
    <property type="match status" value="1"/>
</dbReference>
<dbReference type="HAMAP" id="MF_01369_B">
    <property type="entry name" value="Ribosomal_uL23_B"/>
    <property type="match status" value="1"/>
</dbReference>
<dbReference type="InterPro" id="IPR012677">
    <property type="entry name" value="Nucleotide-bd_a/b_plait_sf"/>
</dbReference>
<dbReference type="InterPro" id="IPR013025">
    <property type="entry name" value="Ribosomal_uL23-like"/>
</dbReference>
<dbReference type="InterPro" id="IPR012678">
    <property type="entry name" value="Ribosomal_uL23/eL15/eS24_sf"/>
</dbReference>
<dbReference type="NCBIfam" id="NF004359">
    <property type="entry name" value="PRK05738.1-3"/>
    <property type="match status" value="1"/>
</dbReference>
<dbReference type="NCBIfam" id="NF004363">
    <property type="entry name" value="PRK05738.2-4"/>
    <property type="match status" value="1"/>
</dbReference>
<dbReference type="PANTHER" id="PTHR11620">
    <property type="entry name" value="60S RIBOSOMAL PROTEIN L23A"/>
    <property type="match status" value="1"/>
</dbReference>
<dbReference type="Pfam" id="PF00276">
    <property type="entry name" value="Ribosomal_L23"/>
    <property type="match status" value="1"/>
</dbReference>
<dbReference type="SUPFAM" id="SSF54189">
    <property type="entry name" value="Ribosomal proteins S24e, L23 and L15e"/>
    <property type="match status" value="1"/>
</dbReference>
<gene>
    <name evidence="1" type="primary">rplW</name>
    <name type="ordered locus">PD_0439</name>
</gene>
<reference key="1">
    <citation type="journal article" date="2003" name="J. Bacteriol.">
        <title>Comparative analyses of the complete genome sequences of Pierce's disease and citrus variegated chlorosis strains of Xylella fastidiosa.</title>
        <authorList>
            <person name="Van Sluys M.A."/>
            <person name="de Oliveira M.C."/>
            <person name="Monteiro-Vitorello C.B."/>
            <person name="Miyaki C.Y."/>
            <person name="Furlan L.R."/>
            <person name="Camargo L.E.A."/>
            <person name="da Silva A.C.R."/>
            <person name="Moon D.H."/>
            <person name="Takita M.A."/>
            <person name="Lemos E.G.M."/>
            <person name="Machado M.A."/>
            <person name="Ferro M.I.T."/>
            <person name="da Silva F.R."/>
            <person name="Goldman M.H.S."/>
            <person name="Goldman G.H."/>
            <person name="Lemos M.V.F."/>
            <person name="El-Dorry H."/>
            <person name="Tsai S.M."/>
            <person name="Carrer H."/>
            <person name="Carraro D.M."/>
            <person name="de Oliveira R.C."/>
            <person name="Nunes L.R."/>
            <person name="Siqueira W.J."/>
            <person name="Coutinho L.L."/>
            <person name="Kimura E.T."/>
            <person name="Ferro E.S."/>
            <person name="Harakava R."/>
            <person name="Kuramae E.E."/>
            <person name="Marino C.L."/>
            <person name="Giglioti E."/>
            <person name="Abreu I.L."/>
            <person name="Alves L.M.C."/>
            <person name="do Amaral A.M."/>
            <person name="Baia G.S."/>
            <person name="Blanco S.R."/>
            <person name="Brito M.S."/>
            <person name="Cannavan F.S."/>
            <person name="Celestino A.V."/>
            <person name="da Cunha A.F."/>
            <person name="Fenille R.C."/>
            <person name="Ferro J.A."/>
            <person name="Formighieri E.F."/>
            <person name="Kishi L.T."/>
            <person name="Leoni S.G."/>
            <person name="Oliveira A.R."/>
            <person name="Rosa V.E. Jr."/>
            <person name="Sassaki F.T."/>
            <person name="Sena J.A.D."/>
            <person name="de Souza A.A."/>
            <person name="Truffi D."/>
            <person name="Tsukumo F."/>
            <person name="Yanai G.M."/>
            <person name="Zaros L.G."/>
            <person name="Civerolo E.L."/>
            <person name="Simpson A.J.G."/>
            <person name="Almeida N.F. Jr."/>
            <person name="Setubal J.C."/>
            <person name="Kitajima J.P."/>
        </authorList>
    </citation>
    <scope>NUCLEOTIDE SEQUENCE [LARGE SCALE GENOMIC DNA]</scope>
    <source>
        <strain>Temecula1 / ATCC 700964</strain>
    </source>
</reference>
<sequence length="100" mass="11110">MNSSCEKIFGVLRSPRVSEKSSRLQEISNVYVFEVSSDATKIDVKNAVERLFDVKVGVVRVLNVKGKSKSFRNRGGSRSGWRKAYVRLIDGQSIDVASSV</sequence>
<feature type="chain" id="PRO_0000272881" description="Large ribosomal subunit protein uL23">
    <location>
        <begin position="1"/>
        <end position="100"/>
    </location>
</feature>
<accession>Q87E80</accession>
<organism>
    <name type="scientific">Xylella fastidiosa (strain Temecula1 / ATCC 700964)</name>
    <dbReference type="NCBI Taxonomy" id="183190"/>
    <lineage>
        <taxon>Bacteria</taxon>
        <taxon>Pseudomonadati</taxon>
        <taxon>Pseudomonadota</taxon>
        <taxon>Gammaproteobacteria</taxon>
        <taxon>Lysobacterales</taxon>
        <taxon>Lysobacteraceae</taxon>
        <taxon>Xylella</taxon>
    </lineage>
</organism>
<name>RL23_XYLFT</name>
<comment type="function">
    <text evidence="1">One of the early assembly proteins it binds 23S rRNA. One of the proteins that surrounds the polypeptide exit tunnel on the outside of the ribosome. Forms the main docking site for trigger factor binding to the ribosome.</text>
</comment>
<comment type="subunit">
    <text evidence="1">Part of the 50S ribosomal subunit. Contacts protein L29, and trigger factor when it is bound to the ribosome.</text>
</comment>
<comment type="similarity">
    <text evidence="1">Belongs to the universal ribosomal protein uL23 family.</text>
</comment>